<sequence>MHQDYFEHDVIVVGGGHSGSEAAAAAANMGADTLLITMKLADIGQMSCNPAIGGIGKGHIAREIDALGGIMGKATDRAGIQFRMLNKSKGPAVWGPRAQCGRRAYARAIRQELEAIDNLKMRSDMVKEILTDDAGETVTGVRTNLGKEFRAPCVVLTTGTFSNGVIHVGEQNFGGGRIGESASHGITGCLHDLGFESGRLKTGTPPRVDGRSIDYSVMEKQPGDPDATAFSFLTDDLPSVEAQLSCWLTDTTPETHEVLRTGFDRSPMFTGALDADGPRYCPSIEDKIDRFSEKDHHQLFIEPEGRDTHEVYVNGFSSSLPEEVQFEALRTVPGMEEAHMHRPGYAIEYDFFPPYQIEYSLETKYVDGLFFAGQINGTTGYEEAAAQGIMAGINAVQKLRQADPIVLKRSEAYIGVLIDDLVAKGTDEPYRMFTSRAEHRILLRQDNADQRLTELGHKLGLASKERLDRTREKERAIDVTRETLSDTTVSPQQVDDYLQSVGTSTLNQPRPVIELCKRPEVDSEDLLRHAGLYDEVVTEAPGMLSAPRLIEIDLKYEGYIDRQKDMVEEMEEKERWPIPDDFDYHALDNISIEARQKLSKVEPDNLGQASRVPGVRASDISVLMVLLKNEGVEPMPKDRDLNLDAMGGDGQSFGVSRETAVEVG</sequence>
<accession>Q2S6G8</accession>
<name>MNMG_SALRD</name>
<protein>
    <recommendedName>
        <fullName evidence="1">tRNA uridine 5-carboxymethylaminomethyl modification enzyme MnmG</fullName>
    </recommendedName>
    <alternativeName>
        <fullName evidence="1">Glucose-inhibited division protein A</fullName>
    </alternativeName>
</protein>
<evidence type="ECO:0000255" key="1">
    <source>
        <dbReference type="HAMAP-Rule" id="MF_00129"/>
    </source>
</evidence>
<keyword id="KW-0963">Cytoplasm</keyword>
<keyword id="KW-0274">FAD</keyword>
<keyword id="KW-0285">Flavoprotein</keyword>
<keyword id="KW-0520">NAD</keyword>
<keyword id="KW-1185">Reference proteome</keyword>
<keyword id="KW-0819">tRNA processing</keyword>
<comment type="function">
    <text evidence="1">NAD-binding protein involved in the addition of a carboxymethylaminomethyl (cmnm) group at the wobble position (U34) of certain tRNAs, forming tRNA-cmnm(5)s(2)U34.</text>
</comment>
<comment type="cofactor">
    <cofactor evidence="1">
        <name>FAD</name>
        <dbReference type="ChEBI" id="CHEBI:57692"/>
    </cofactor>
</comment>
<comment type="subunit">
    <text evidence="1">Homodimer. Heterotetramer of two MnmE and two MnmG subunits.</text>
</comment>
<comment type="subcellular location">
    <subcellularLocation>
        <location evidence="1">Cytoplasm</location>
    </subcellularLocation>
</comment>
<comment type="similarity">
    <text evidence="1">Belongs to the MnmG family.</text>
</comment>
<reference key="1">
    <citation type="journal article" date="2005" name="Proc. Natl. Acad. Sci. U.S.A.">
        <title>The genome of Salinibacter ruber: convergence and gene exchange among hyperhalophilic bacteria and archaea.</title>
        <authorList>
            <person name="Mongodin E.F."/>
            <person name="Nelson K.E."/>
            <person name="Daugherty S."/>
            <person name="DeBoy R.T."/>
            <person name="Wister J."/>
            <person name="Khouri H."/>
            <person name="Weidman J."/>
            <person name="Walsh D.A."/>
            <person name="Papke R.T."/>
            <person name="Sanchez Perez G."/>
            <person name="Sharma A.K."/>
            <person name="Nesbo C.L."/>
            <person name="MacLeod D."/>
            <person name="Bapteste E."/>
            <person name="Doolittle W.F."/>
            <person name="Charlebois R.L."/>
            <person name="Legault B."/>
            <person name="Rodriguez-Valera F."/>
        </authorList>
    </citation>
    <scope>NUCLEOTIDE SEQUENCE [LARGE SCALE GENOMIC DNA]</scope>
    <source>
        <strain>DSM 13855 / CECT 5946 / M31</strain>
    </source>
</reference>
<dbReference type="EMBL" id="CP000159">
    <property type="protein sequence ID" value="ABC44526.1"/>
    <property type="molecule type" value="Genomic_DNA"/>
</dbReference>
<dbReference type="RefSeq" id="WP_011402846.1">
    <property type="nucleotide sequence ID" value="NC_007677.1"/>
</dbReference>
<dbReference type="RefSeq" id="YP_444213.1">
    <property type="nucleotide sequence ID" value="NC_007677.1"/>
</dbReference>
<dbReference type="SMR" id="Q2S6G8"/>
<dbReference type="STRING" id="309807.SRU_0060"/>
<dbReference type="EnsemblBacteria" id="ABC44526">
    <property type="protein sequence ID" value="ABC44526"/>
    <property type="gene ID" value="SRU_0060"/>
</dbReference>
<dbReference type="KEGG" id="sru:SRU_0060"/>
<dbReference type="PATRIC" id="fig|309807.25.peg.61"/>
<dbReference type="eggNOG" id="COG0445">
    <property type="taxonomic scope" value="Bacteria"/>
</dbReference>
<dbReference type="HOGENOM" id="CLU_007831_2_2_10"/>
<dbReference type="OrthoDB" id="9815560at2"/>
<dbReference type="Proteomes" id="UP000008674">
    <property type="component" value="Chromosome"/>
</dbReference>
<dbReference type="GO" id="GO:0005829">
    <property type="term" value="C:cytosol"/>
    <property type="evidence" value="ECO:0007669"/>
    <property type="project" value="TreeGrafter"/>
</dbReference>
<dbReference type="GO" id="GO:0050660">
    <property type="term" value="F:flavin adenine dinucleotide binding"/>
    <property type="evidence" value="ECO:0007669"/>
    <property type="project" value="UniProtKB-UniRule"/>
</dbReference>
<dbReference type="GO" id="GO:0030488">
    <property type="term" value="P:tRNA methylation"/>
    <property type="evidence" value="ECO:0007669"/>
    <property type="project" value="TreeGrafter"/>
</dbReference>
<dbReference type="GO" id="GO:0002098">
    <property type="term" value="P:tRNA wobble uridine modification"/>
    <property type="evidence" value="ECO:0007669"/>
    <property type="project" value="InterPro"/>
</dbReference>
<dbReference type="FunFam" id="1.10.150.570:FF:000001">
    <property type="entry name" value="tRNA uridine 5-carboxymethylaminomethyl modification enzyme MnmG"/>
    <property type="match status" value="1"/>
</dbReference>
<dbReference type="FunFam" id="3.50.50.60:FF:000002">
    <property type="entry name" value="tRNA uridine 5-carboxymethylaminomethyl modification enzyme MnmG"/>
    <property type="match status" value="1"/>
</dbReference>
<dbReference type="Gene3D" id="3.50.50.60">
    <property type="entry name" value="FAD/NAD(P)-binding domain"/>
    <property type="match status" value="2"/>
</dbReference>
<dbReference type="Gene3D" id="1.10.150.570">
    <property type="entry name" value="GidA associated domain, C-terminal subdomain"/>
    <property type="match status" value="1"/>
</dbReference>
<dbReference type="Gene3D" id="1.10.10.1800">
    <property type="entry name" value="tRNA uridine 5-carboxymethylaminomethyl modification enzyme MnmG/GidA"/>
    <property type="match status" value="1"/>
</dbReference>
<dbReference type="HAMAP" id="MF_00129">
    <property type="entry name" value="MnmG_GidA"/>
    <property type="match status" value="1"/>
</dbReference>
<dbReference type="InterPro" id="IPR036188">
    <property type="entry name" value="FAD/NAD-bd_sf"/>
</dbReference>
<dbReference type="InterPro" id="IPR049312">
    <property type="entry name" value="GIDA_C_N"/>
</dbReference>
<dbReference type="InterPro" id="IPR004416">
    <property type="entry name" value="MnmG"/>
</dbReference>
<dbReference type="InterPro" id="IPR002218">
    <property type="entry name" value="MnmG-rel"/>
</dbReference>
<dbReference type="InterPro" id="IPR020595">
    <property type="entry name" value="MnmG-rel_CS"/>
</dbReference>
<dbReference type="InterPro" id="IPR026904">
    <property type="entry name" value="MnmG_C"/>
</dbReference>
<dbReference type="InterPro" id="IPR047001">
    <property type="entry name" value="MnmG_C_subdom"/>
</dbReference>
<dbReference type="InterPro" id="IPR044920">
    <property type="entry name" value="MnmG_C_subdom_sf"/>
</dbReference>
<dbReference type="InterPro" id="IPR040131">
    <property type="entry name" value="MnmG_N"/>
</dbReference>
<dbReference type="NCBIfam" id="TIGR00136">
    <property type="entry name" value="mnmG_gidA"/>
    <property type="match status" value="1"/>
</dbReference>
<dbReference type="PANTHER" id="PTHR11806">
    <property type="entry name" value="GLUCOSE INHIBITED DIVISION PROTEIN A"/>
    <property type="match status" value="1"/>
</dbReference>
<dbReference type="PANTHER" id="PTHR11806:SF0">
    <property type="entry name" value="PROTEIN MTO1 HOMOLOG, MITOCHONDRIAL"/>
    <property type="match status" value="1"/>
</dbReference>
<dbReference type="Pfam" id="PF01134">
    <property type="entry name" value="GIDA"/>
    <property type="match status" value="1"/>
</dbReference>
<dbReference type="Pfam" id="PF21680">
    <property type="entry name" value="GIDA_C_1st"/>
    <property type="match status" value="1"/>
</dbReference>
<dbReference type="Pfam" id="PF13932">
    <property type="entry name" value="SAM_GIDA_C"/>
    <property type="match status" value="1"/>
</dbReference>
<dbReference type="PRINTS" id="PR00411">
    <property type="entry name" value="PNDRDTASEI"/>
</dbReference>
<dbReference type="SMART" id="SM01228">
    <property type="entry name" value="GIDA_assoc_3"/>
    <property type="match status" value="1"/>
</dbReference>
<dbReference type="SUPFAM" id="SSF51905">
    <property type="entry name" value="FAD/NAD(P)-binding domain"/>
    <property type="match status" value="1"/>
</dbReference>
<dbReference type="PROSITE" id="PS01280">
    <property type="entry name" value="GIDA_1"/>
    <property type="match status" value="1"/>
</dbReference>
<dbReference type="PROSITE" id="PS01281">
    <property type="entry name" value="GIDA_2"/>
    <property type="match status" value="1"/>
</dbReference>
<proteinExistence type="inferred from homology"/>
<feature type="chain" id="PRO_0000345330" description="tRNA uridine 5-carboxymethylaminomethyl modification enzyme MnmG">
    <location>
        <begin position="1"/>
        <end position="664"/>
    </location>
</feature>
<feature type="binding site" evidence="1">
    <location>
        <begin position="14"/>
        <end position="19"/>
    </location>
    <ligand>
        <name>FAD</name>
        <dbReference type="ChEBI" id="CHEBI:57692"/>
    </ligand>
</feature>
<feature type="binding site" evidence="1">
    <location>
        <position position="126"/>
    </location>
    <ligand>
        <name>FAD</name>
        <dbReference type="ChEBI" id="CHEBI:57692"/>
    </ligand>
</feature>
<feature type="binding site" evidence="1">
    <location>
        <position position="183"/>
    </location>
    <ligand>
        <name>FAD</name>
        <dbReference type="ChEBI" id="CHEBI:57692"/>
    </ligand>
</feature>
<feature type="binding site" evidence="1">
    <location>
        <begin position="277"/>
        <end position="291"/>
    </location>
    <ligand>
        <name>NAD(+)</name>
        <dbReference type="ChEBI" id="CHEBI:57540"/>
    </ligand>
</feature>
<feature type="binding site" evidence="1">
    <location>
        <position position="374"/>
    </location>
    <ligand>
        <name>FAD</name>
        <dbReference type="ChEBI" id="CHEBI:57692"/>
    </ligand>
</feature>
<gene>
    <name evidence="1" type="primary">mnmG</name>
    <name evidence="1" type="synonym">gidA</name>
    <name type="ordered locus">SRU_0060</name>
</gene>
<organism>
    <name type="scientific">Salinibacter ruber (strain DSM 13855 / M31)</name>
    <dbReference type="NCBI Taxonomy" id="309807"/>
    <lineage>
        <taxon>Bacteria</taxon>
        <taxon>Pseudomonadati</taxon>
        <taxon>Rhodothermota</taxon>
        <taxon>Rhodothermia</taxon>
        <taxon>Rhodothermales</taxon>
        <taxon>Salinibacteraceae</taxon>
        <taxon>Salinibacter</taxon>
    </lineage>
</organism>